<gene>
    <name evidence="1" type="primary">carA</name>
    <name type="ordered locus">BUsg_138</name>
</gene>
<protein>
    <recommendedName>
        <fullName evidence="1">Carbamoyl phosphate synthase small chain</fullName>
        <ecNumber evidence="1">6.3.5.5</ecNumber>
    </recommendedName>
    <alternativeName>
        <fullName evidence="1">Carbamoyl phosphate synthetase glutamine chain</fullName>
    </alternativeName>
</protein>
<comment type="function">
    <text evidence="1">Small subunit of the glutamine-dependent carbamoyl phosphate synthetase (CPSase). CPSase catalyzes the formation of carbamoyl phosphate from the ammonia moiety of glutamine, carbonate, and phosphate donated by ATP, constituting the first step of 2 biosynthetic pathways, one leading to arginine and/or urea and the other to pyrimidine nucleotides. The small subunit (glutamine amidotransferase) binds and cleaves glutamine to supply the large subunit with the substrate ammonia.</text>
</comment>
<comment type="catalytic activity">
    <reaction evidence="1">
        <text>hydrogencarbonate + L-glutamine + 2 ATP + H2O = carbamoyl phosphate + L-glutamate + 2 ADP + phosphate + 2 H(+)</text>
        <dbReference type="Rhea" id="RHEA:18633"/>
        <dbReference type="ChEBI" id="CHEBI:15377"/>
        <dbReference type="ChEBI" id="CHEBI:15378"/>
        <dbReference type="ChEBI" id="CHEBI:17544"/>
        <dbReference type="ChEBI" id="CHEBI:29985"/>
        <dbReference type="ChEBI" id="CHEBI:30616"/>
        <dbReference type="ChEBI" id="CHEBI:43474"/>
        <dbReference type="ChEBI" id="CHEBI:58228"/>
        <dbReference type="ChEBI" id="CHEBI:58359"/>
        <dbReference type="ChEBI" id="CHEBI:456216"/>
        <dbReference type="EC" id="6.3.5.5"/>
    </reaction>
</comment>
<comment type="catalytic activity">
    <molecule>Carbamoyl phosphate synthase small chain</molecule>
    <reaction evidence="1">
        <text>L-glutamine + H2O = L-glutamate + NH4(+)</text>
        <dbReference type="Rhea" id="RHEA:15889"/>
        <dbReference type="ChEBI" id="CHEBI:15377"/>
        <dbReference type="ChEBI" id="CHEBI:28938"/>
        <dbReference type="ChEBI" id="CHEBI:29985"/>
        <dbReference type="ChEBI" id="CHEBI:58359"/>
    </reaction>
</comment>
<comment type="pathway">
    <text evidence="1">Amino-acid biosynthesis; L-arginine biosynthesis; carbamoyl phosphate from bicarbonate: step 1/1.</text>
</comment>
<comment type="pathway">
    <text evidence="1">Pyrimidine metabolism; UMP biosynthesis via de novo pathway; (S)-dihydroorotate from bicarbonate: step 1/3.</text>
</comment>
<comment type="subunit">
    <text evidence="1">Composed of two chains; the small (or glutamine) chain promotes the hydrolysis of glutamine to ammonia, which is used by the large (or ammonia) chain to synthesize carbamoyl phosphate. Tetramer of heterodimers (alpha,beta)4.</text>
</comment>
<comment type="similarity">
    <text evidence="1">Belongs to the CarA family.</text>
</comment>
<organism>
    <name type="scientific">Buchnera aphidicola subsp. Schizaphis graminum (strain Sg)</name>
    <dbReference type="NCBI Taxonomy" id="198804"/>
    <lineage>
        <taxon>Bacteria</taxon>
        <taxon>Pseudomonadati</taxon>
        <taxon>Pseudomonadota</taxon>
        <taxon>Gammaproteobacteria</taxon>
        <taxon>Enterobacterales</taxon>
        <taxon>Erwiniaceae</taxon>
        <taxon>Buchnera</taxon>
    </lineage>
</organism>
<accession>Q8K9Z6</accession>
<name>CARA_BUCAP</name>
<keyword id="KW-0028">Amino-acid biosynthesis</keyword>
<keyword id="KW-0055">Arginine biosynthesis</keyword>
<keyword id="KW-0067">ATP-binding</keyword>
<keyword id="KW-0315">Glutamine amidotransferase</keyword>
<keyword id="KW-0436">Ligase</keyword>
<keyword id="KW-0547">Nucleotide-binding</keyword>
<keyword id="KW-0665">Pyrimidine biosynthesis</keyword>
<dbReference type="EC" id="6.3.5.5" evidence="1"/>
<dbReference type="EMBL" id="AE013218">
    <property type="protein sequence ID" value="AAM67706.1"/>
    <property type="molecule type" value="Genomic_DNA"/>
</dbReference>
<dbReference type="SMR" id="Q8K9Z6"/>
<dbReference type="STRING" id="198804.BUsg_138"/>
<dbReference type="KEGG" id="bas:BUsg_138"/>
<dbReference type="eggNOG" id="COG0505">
    <property type="taxonomic scope" value="Bacteria"/>
</dbReference>
<dbReference type="HOGENOM" id="CLU_035901_1_1_6"/>
<dbReference type="UniPathway" id="UPA00068">
    <property type="reaction ID" value="UER00171"/>
</dbReference>
<dbReference type="UniPathway" id="UPA00070">
    <property type="reaction ID" value="UER00115"/>
</dbReference>
<dbReference type="Proteomes" id="UP000000416">
    <property type="component" value="Chromosome"/>
</dbReference>
<dbReference type="GO" id="GO:0005524">
    <property type="term" value="F:ATP binding"/>
    <property type="evidence" value="ECO:0007669"/>
    <property type="project" value="UniProtKB-UniRule"/>
</dbReference>
<dbReference type="GO" id="GO:0004088">
    <property type="term" value="F:carbamoyl-phosphate synthase (glutamine-hydrolyzing) activity"/>
    <property type="evidence" value="ECO:0007669"/>
    <property type="project" value="UniProtKB-UniRule"/>
</dbReference>
<dbReference type="GO" id="GO:0004359">
    <property type="term" value="F:glutaminase activity"/>
    <property type="evidence" value="ECO:0007669"/>
    <property type="project" value="RHEA"/>
</dbReference>
<dbReference type="GO" id="GO:0006207">
    <property type="term" value="P:'de novo' pyrimidine nucleobase biosynthetic process"/>
    <property type="evidence" value="ECO:0007669"/>
    <property type="project" value="InterPro"/>
</dbReference>
<dbReference type="GO" id="GO:0044205">
    <property type="term" value="P:'de novo' UMP biosynthetic process"/>
    <property type="evidence" value="ECO:0007669"/>
    <property type="project" value="UniProtKB-UniRule"/>
</dbReference>
<dbReference type="GO" id="GO:0006541">
    <property type="term" value="P:glutamine metabolic process"/>
    <property type="evidence" value="ECO:0007669"/>
    <property type="project" value="InterPro"/>
</dbReference>
<dbReference type="GO" id="GO:0006526">
    <property type="term" value="P:L-arginine biosynthetic process"/>
    <property type="evidence" value="ECO:0007669"/>
    <property type="project" value="UniProtKB-UniRule"/>
</dbReference>
<dbReference type="CDD" id="cd01744">
    <property type="entry name" value="GATase1_CPSase"/>
    <property type="match status" value="1"/>
</dbReference>
<dbReference type="FunFam" id="3.40.50.880:FF:000011">
    <property type="entry name" value="Carbamoyl-phosphate synthase small chain"/>
    <property type="match status" value="1"/>
</dbReference>
<dbReference type="FunFam" id="3.50.30.20:FF:000001">
    <property type="entry name" value="Carbamoyl-phosphate synthase small chain"/>
    <property type="match status" value="1"/>
</dbReference>
<dbReference type="Gene3D" id="3.40.50.880">
    <property type="match status" value="1"/>
</dbReference>
<dbReference type="Gene3D" id="3.50.30.20">
    <property type="entry name" value="Carbamoyl-phosphate synthase small subunit, N-terminal domain"/>
    <property type="match status" value="1"/>
</dbReference>
<dbReference type="HAMAP" id="MF_01209">
    <property type="entry name" value="CPSase_S_chain"/>
    <property type="match status" value="1"/>
</dbReference>
<dbReference type="InterPro" id="IPR050472">
    <property type="entry name" value="Anth_synth/Amidotransfase"/>
</dbReference>
<dbReference type="InterPro" id="IPR006274">
    <property type="entry name" value="CarbamoylP_synth_ssu"/>
</dbReference>
<dbReference type="InterPro" id="IPR002474">
    <property type="entry name" value="CarbamoylP_synth_ssu_N"/>
</dbReference>
<dbReference type="InterPro" id="IPR036480">
    <property type="entry name" value="CarbP_synth_ssu_N_sf"/>
</dbReference>
<dbReference type="InterPro" id="IPR029062">
    <property type="entry name" value="Class_I_gatase-like"/>
</dbReference>
<dbReference type="InterPro" id="IPR035686">
    <property type="entry name" value="CPSase_GATase1"/>
</dbReference>
<dbReference type="InterPro" id="IPR017926">
    <property type="entry name" value="GATASE"/>
</dbReference>
<dbReference type="NCBIfam" id="TIGR01368">
    <property type="entry name" value="CPSaseIIsmall"/>
    <property type="match status" value="1"/>
</dbReference>
<dbReference type="NCBIfam" id="NF009475">
    <property type="entry name" value="PRK12838.1"/>
    <property type="match status" value="1"/>
</dbReference>
<dbReference type="PANTHER" id="PTHR43418:SF7">
    <property type="entry name" value="CARBAMOYL-PHOSPHATE SYNTHASE SMALL CHAIN"/>
    <property type="match status" value="1"/>
</dbReference>
<dbReference type="PANTHER" id="PTHR43418">
    <property type="entry name" value="MULTIFUNCTIONAL TRYPTOPHAN BIOSYNTHESIS PROTEIN-RELATED"/>
    <property type="match status" value="1"/>
</dbReference>
<dbReference type="Pfam" id="PF00988">
    <property type="entry name" value="CPSase_sm_chain"/>
    <property type="match status" value="1"/>
</dbReference>
<dbReference type="Pfam" id="PF00117">
    <property type="entry name" value="GATase"/>
    <property type="match status" value="1"/>
</dbReference>
<dbReference type="PRINTS" id="PR00097">
    <property type="entry name" value="ANTSNTHASEII"/>
</dbReference>
<dbReference type="PRINTS" id="PR00099">
    <property type="entry name" value="CPSGATASE"/>
</dbReference>
<dbReference type="PRINTS" id="PR00096">
    <property type="entry name" value="GATASE"/>
</dbReference>
<dbReference type="SMART" id="SM01097">
    <property type="entry name" value="CPSase_sm_chain"/>
    <property type="match status" value="1"/>
</dbReference>
<dbReference type="SUPFAM" id="SSF52021">
    <property type="entry name" value="Carbamoyl phosphate synthetase, small subunit N-terminal domain"/>
    <property type="match status" value="1"/>
</dbReference>
<dbReference type="SUPFAM" id="SSF52317">
    <property type="entry name" value="Class I glutamine amidotransferase-like"/>
    <property type="match status" value="1"/>
</dbReference>
<dbReference type="PROSITE" id="PS51273">
    <property type="entry name" value="GATASE_TYPE_1"/>
    <property type="match status" value="1"/>
</dbReference>
<feature type="chain" id="PRO_0000112262" description="Carbamoyl phosphate synthase small chain">
    <location>
        <begin position="1"/>
        <end position="385"/>
    </location>
</feature>
<feature type="domain" description="Glutamine amidotransferase type-1" evidence="1">
    <location>
        <begin position="197"/>
        <end position="384"/>
    </location>
</feature>
<feature type="region of interest" description="CPSase" evidence="1">
    <location>
        <begin position="1"/>
        <end position="196"/>
    </location>
</feature>
<feature type="active site" description="Nucleophile" evidence="1">
    <location>
        <position position="273"/>
    </location>
</feature>
<feature type="active site" evidence="1">
    <location>
        <position position="357"/>
    </location>
</feature>
<feature type="active site" evidence="1">
    <location>
        <position position="359"/>
    </location>
</feature>
<feature type="binding site" evidence="1">
    <location>
        <position position="51"/>
    </location>
    <ligand>
        <name>L-glutamine</name>
        <dbReference type="ChEBI" id="CHEBI:58359"/>
    </ligand>
</feature>
<feature type="binding site" evidence="1">
    <location>
        <position position="245"/>
    </location>
    <ligand>
        <name>L-glutamine</name>
        <dbReference type="ChEBI" id="CHEBI:58359"/>
    </ligand>
</feature>
<feature type="binding site" evidence="1">
    <location>
        <position position="247"/>
    </location>
    <ligand>
        <name>L-glutamine</name>
        <dbReference type="ChEBI" id="CHEBI:58359"/>
    </ligand>
</feature>
<feature type="binding site" evidence="1">
    <location>
        <position position="274"/>
    </location>
    <ligand>
        <name>L-glutamine</name>
        <dbReference type="ChEBI" id="CHEBI:58359"/>
    </ligand>
</feature>
<feature type="binding site" evidence="1">
    <location>
        <position position="277"/>
    </location>
    <ligand>
        <name>L-glutamine</name>
        <dbReference type="ChEBI" id="CHEBI:58359"/>
    </ligand>
</feature>
<feature type="binding site" evidence="1">
    <location>
        <position position="315"/>
    </location>
    <ligand>
        <name>L-glutamine</name>
        <dbReference type="ChEBI" id="CHEBI:58359"/>
    </ligand>
</feature>
<feature type="binding site" evidence="1">
    <location>
        <position position="318"/>
    </location>
    <ligand>
        <name>L-glutamine</name>
        <dbReference type="ChEBI" id="CHEBI:58359"/>
    </ligand>
</feature>
<sequence length="385" mass="42790">MEDALGQLAVLVLEDGTRFHGRSIGAKGTTVGEVVFNTSITGYQEIITDPSYSHQIVTLTHPHIGNIGTNCNDEESSKIHIRGLIIRDMSPISSNYRSEKSFSSYLKENNIVAISDIDTRKLTRILRTKGSQNGCIIEDKKENYSVAYQKAKKFLSLQGLDLAKKVSTKFIYNWDKGSFFINKSKSKLEKKKKFLFHIVVYDFGVKRNILRMLVDRGCYLTVVPAKTDPKIALNLNPDGIFLSNGPGDPRPCDYAIHAIQCFLKKNIPIFGICLGHQLLALASGANIIKMKFGHHGGNHPVKEIKTNRVIITSQNHSFTVDAKNMPNNIAITHSSLFDGTLQGLCLTDKLAFSFQGHPEASPGPHDASSLFDHFIKLLNQVKFSN</sequence>
<proteinExistence type="inferred from homology"/>
<reference key="1">
    <citation type="journal article" date="2002" name="Science">
        <title>50 million years of genomic stasis in endosymbiotic bacteria.</title>
        <authorList>
            <person name="Tamas I."/>
            <person name="Klasson L."/>
            <person name="Canbaeck B."/>
            <person name="Naeslund A.K."/>
            <person name="Eriksson A.-S."/>
            <person name="Wernegreen J.J."/>
            <person name="Sandstroem J.P."/>
            <person name="Moran N.A."/>
            <person name="Andersson S.G.E."/>
        </authorList>
    </citation>
    <scope>NUCLEOTIDE SEQUENCE [LARGE SCALE GENOMIC DNA]</scope>
    <source>
        <strain>Sg</strain>
    </source>
</reference>
<evidence type="ECO:0000255" key="1">
    <source>
        <dbReference type="HAMAP-Rule" id="MF_01209"/>
    </source>
</evidence>